<dbReference type="EMBL" id="AC016757">
    <property type="status" value="NOT_ANNOTATED_CDS"/>
    <property type="molecule type" value="Genomic_DNA"/>
</dbReference>
<dbReference type="EMBL" id="BX280405">
    <property type="status" value="NOT_ANNOTATED_CDS"/>
    <property type="molecule type" value="mRNA"/>
</dbReference>
<dbReference type="EMBL" id="AK125364">
    <property type="protein sequence ID" value="BAC86148.1"/>
    <property type="status" value="ALT_SEQ"/>
    <property type="molecule type" value="mRNA"/>
</dbReference>
<dbReference type="EMBL" id="BC105696">
    <property type="protein sequence ID" value="AAI05697.1"/>
    <property type="molecule type" value="mRNA"/>
</dbReference>
<dbReference type="CCDS" id="CCDS46555.2"/>
<dbReference type="RefSeq" id="NP_940984.3">
    <property type="nucleotide sequence ID" value="NM_198582.4"/>
</dbReference>
<dbReference type="SMR" id="Q0D2K2"/>
<dbReference type="BioGRID" id="132015">
    <property type="interactions" value="1"/>
</dbReference>
<dbReference type="ComplexPortal" id="CPX-8150">
    <property type="entry name" value="CRL3 E3 ubiquitin ligase complex, KLHL30 variant"/>
</dbReference>
<dbReference type="FunCoup" id="Q0D2K2">
    <property type="interactions" value="1"/>
</dbReference>
<dbReference type="STRING" id="9606.ENSP00000386389"/>
<dbReference type="GlyGen" id="Q0D2K2">
    <property type="glycosylation" value="4 sites, 1 O-linked glycan (2 sites)"/>
</dbReference>
<dbReference type="iPTMnet" id="Q0D2K2"/>
<dbReference type="PhosphoSitePlus" id="Q0D2K2"/>
<dbReference type="BioMuta" id="KLHL30"/>
<dbReference type="DMDM" id="327478576"/>
<dbReference type="MassIVE" id="Q0D2K2"/>
<dbReference type="PaxDb" id="9606-ENSP00000386389"/>
<dbReference type="PeptideAtlas" id="Q0D2K2"/>
<dbReference type="ProteomicsDB" id="58745"/>
<dbReference type="Antibodypedia" id="50046">
    <property type="antibodies" value="74 antibodies from 13 providers"/>
</dbReference>
<dbReference type="DNASU" id="377007"/>
<dbReference type="Ensembl" id="ENST00000409223.2">
    <property type="protein sequence ID" value="ENSP00000386389.1"/>
    <property type="gene ID" value="ENSG00000168427.9"/>
</dbReference>
<dbReference type="GeneID" id="377007"/>
<dbReference type="KEGG" id="hsa:377007"/>
<dbReference type="MANE-Select" id="ENST00000409223.2">
    <property type="protein sequence ID" value="ENSP00000386389.1"/>
    <property type="RefSeq nucleotide sequence ID" value="NM_198582.4"/>
    <property type="RefSeq protein sequence ID" value="NP_940984.3"/>
</dbReference>
<dbReference type="UCSC" id="uc002vxr.3">
    <property type="organism name" value="human"/>
</dbReference>
<dbReference type="AGR" id="HGNC:24770"/>
<dbReference type="CTD" id="377007"/>
<dbReference type="DisGeNET" id="377007"/>
<dbReference type="GeneCards" id="KLHL30"/>
<dbReference type="HGNC" id="HGNC:24770">
    <property type="gene designation" value="KLHL30"/>
</dbReference>
<dbReference type="HPA" id="ENSG00000168427">
    <property type="expression patterns" value="Tissue enriched (skeletal)"/>
</dbReference>
<dbReference type="neXtProt" id="NX_Q0D2K2"/>
<dbReference type="OpenTargets" id="ENSG00000168427"/>
<dbReference type="PharmGKB" id="PA162393522"/>
<dbReference type="VEuPathDB" id="HostDB:ENSG00000168427"/>
<dbReference type="eggNOG" id="KOG4441">
    <property type="taxonomic scope" value="Eukaryota"/>
</dbReference>
<dbReference type="GeneTree" id="ENSGT00940000158597"/>
<dbReference type="HOGENOM" id="CLU_004253_14_6_1"/>
<dbReference type="InParanoid" id="Q0D2K2"/>
<dbReference type="OMA" id="WFYSGVC"/>
<dbReference type="OrthoDB" id="6482909at2759"/>
<dbReference type="PAN-GO" id="Q0D2K2">
    <property type="GO annotations" value="0 GO annotations based on evolutionary models"/>
</dbReference>
<dbReference type="PhylomeDB" id="Q0D2K2"/>
<dbReference type="TreeFam" id="TF329218"/>
<dbReference type="PathwayCommons" id="Q0D2K2"/>
<dbReference type="BioGRID-ORCS" id="377007">
    <property type="hits" value="7 hits in 1181 CRISPR screens"/>
</dbReference>
<dbReference type="GenomeRNAi" id="377007"/>
<dbReference type="Pharos" id="Q0D2K2">
    <property type="development level" value="Tdark"/>
</dbReference>
<dbReference type="PRO" id="PR:Q0D2K2"/>
<dbReference type="Proteomes" id="UP000005640">
    <property type="component" value="Chromosome 2"/>
</dbReference>
<dbReference type="RNAct" id="Q0D2K2">
    <property type="molecule type" value="protein"/>
</dbReference>
<dbReference type="Bgee" id="ENSG00000168427">
    <property type="expression patterns" value="Expressed in gastrocnemius and 91 other cell types or tissues"/>
</dbReference>
<dbReference type="GO" id="GO:0031463">
    <property type="term" value="C:Cul3-RING ubiquitin ligase complex"/>
    <property type="evidence" value="ECO:0000318"/>
    <property type="project" value="GO_Central"/>
</dbReference>
<dbReference type="GO" id="GO:0005737">
    <property type="term" value="C:cytoplasm"/>
    <property type="evidence" value="ECO:0000318"/>
    <property type="project" value="GO_Central"/>
</dbReference>
<dbReference type="GO" id="GO:1990756">
    <property type="term" value="F:ubiquitin-like ligase-substrate adaptor activity"/>
    <property type="evidence" value="ECO:0000318"/>
    <property type="project" value="GO_Central"/>
</dbReference>
<dbReference type="GO" id="GO:0043161">
    <property type="term" value="P:proteasome-mediated ubiquitin-dependent protein catabolic process"/>
    <property type="evidence" value="ECO:0000318"/>
    <property type="project" value="GO_Central"/>
</dbReference>
<dbReference type="CDD" id="cd18469">
    <property type="entry name" value="BACK_KLHL30"/>
    <property type="match status" value="1"/>
</dbReference>
<dbReference type="FunFam" id="1.25.40.420:FF:000001">
    <property type="entry name" value="Kelch-like family member 12"/>
    <property type="match status" value="1"/>
</dbReference>
<dbReference type="Gene3D" id="1.25.40.420">
    <property type="match status" value="1"/>
</dbReference>
<dbReference type="Gene3D" id="2.120.10.80">
    <property type="entry name" value="Kelch-type beta propeller"/>
    <property type="match status" value="1"/>
</dbReference>
<dbReference type="Gene3D" id="3.30.710.10">
    <property type="entry name" value="Potassium Channel Kv1.1, Chain A"/>
    <property type="match status" value="1"/>
</dbReference>
<dbReference type="InterPro" id="IPR011705">
    <property type="entry name" value="BACK"/>
</dbReference>
<dbReference type="InterPro" id="IPR017096">
    <property type="entry name" value="BTB-kelch_protein"/>
</dbReference>
<dbReference type="InterPro" id="IPR000210">
    <property type="entry name" value="BTB/POZ_dom"/>
</dbReference>
<dbReference type="InterPro" id="IPR015915">
    <property type="entry name" value="Kelch-typ_b-propeller"/>
</dbReference>
<dbReference type="InterPro" id="IPR006652">
    <property type="entry name" value="Kelch_1"/>
</dbReference>
<dbReference type="InterPro" id="IPR030582">
    <property type="entry name" value="KLHL30_BACK"/>
</dbReference>
<dbReference type="InterPro" id="IPR011333">
    <property type="entry name" value="SKP1/BTB/POZ_sf"/>
</dbReference>
<dbReference type="PANTHER" id="PTHR24412">
    <property type="entry name" value="KELCH PROTEIN"/>
    <property type="match status" value="1"/>
</dbReference>
<dbReference type="PANTHER" id="PTHR24412:SF398">
    <property type="entry name" value="KELCH-LIKE PROTEIN 30"/>
    <property type="match status" value="1"/>
</dbReference>
<dbReference type="Pfam" id="PF07707">
    <property type="entry name" value="BACK"/>
    <property type="match status" value="1"/>
</dbReference>
<dbReference type="Pfam" id="PF00651">
    <property type="entry name" value="BTB"/>
    <property type="match status" value="1"/>
</dbReference>
<dbReference type="Pfam" id="PF24681">
    <property type="entry name" value="Kelch_KLHDC2_KLHL20_DRC7"/>
    <property type="match status" value="1"/>
</dbReference>
<dbReference type="PIRSF" id="PIRSF037037">
    <property type="entry name" value="Kelch-like_protein_gigaxonin"/>
    <property type="match status" value="1"/>
</dbReference>
<dbReference type="SMART" id="SM00875">
    <property type="entry name" value="BACK"/>
    <property type="match status" value="1"/>
</dbReference>
<dbReference type="SMART" id="SM00225">
    <property type="entry name" value="BTB"/>
    <property type="match status" value="1"/>
</dbReference>
<dbReference type="SMART" id="SM00612">
    <property type="entry name" value="Kelch"/>
    <property type="match status" value="4"/>
</dbReference>
<dbReference type="SUPFAM" id="SSF117281">
    <property type="entry name" value="Kelch motif"/>
    <property type="match status" value="1"/>
</dbReference>
<dbReference type="SUPFAM" id="SSF54695">
    <property type="entry name" value="POZ domain"/>
    <property type="match status" value="1"/>
</dbReference>
<dbReference type="PROSITE" id="PS50097">
    <property type="entry name" value="BTB"/>
    <property type="match status" value="1"/>
</dbReference>
<reference key="1">
    <citation type="journal article" date="2005" name="Nature">
        <title>Generation and annotation of the DNA sequences of human chromosomes 2 and 4.</title>
        <authorList>
            <person name="Hillier L.W."/>
            <person name="Graves T.A."/>
            <person name="Fulton R.S."/>
            <person name="Fulton L.A."/>
            <person name="Pepin K.H."/>
            <person name="Minx P."/>
            <person name="Wagner-McPherson C."/>
            <person name="Layman D."/>
            <person name="Wylie K."/>
            <person name="Sekhon M."/>
            <person name="Becker M.C."/>
            <person name="Fewell G.A."/>
            <person name="Delehaunty K.D."/>
            <person name="Miner T.L."/>
            <person name="Nash W.E."/>
            <person name="Kremitzki C."/>
            <person name="Oddy L."/>
            <person name="Du H."/>
            <person name="Sun H."/>
            <person name="Bradshaw-Cordum H."/>
            <person name="Ali J."/>
            <person name="Carter J."/>
            <person name="Cordes M."/>
            <person name="Harris A."/>
            <person name="Isak A."/>
            <person name="van Brunt A."/>
            <person name="Nguyen C."/>
            <person name="Du F."/>
            <person name="Courtney L."/>
            <person name="Kalicki J."/>
            <person name="Ozersky P."/>
            <person name="Abbott S."/>
            <person name="Armstrong J."/>
            <person name="Belter E.A."/>
            <person name="Caruso L."/>
            <person name="Cedroni M."/>
            <person name="Cotton M."/>
            <person name="Davidson T."/>
            <person name="Desai A."/>
            <person name="Elliott G."/>
            <person name="Erb T."/>
            <person name="Fronick C."/>
            <person name="Gaige T."/>
            <person name="Haakenson W."/>
            <person name="Haglund K."/>
            <person name="Holmes A."/>
            <person name="Harkins R."/>
            <person name="Kim K."/>
            <person name="Kruchowski S.S."/>
            <person name="Strong C.M."/>
            <person name="Grewal N."/>
            <person name="Goyea E."/>
            <person name="Hou S."/>
            <person name="Levy A."/>
            <person name="Martinka S."/>
            <person name="Mead K."/>
            <person name="McLellan M.D."/>
            <person name="Meyer R."/>
            <person name="Randall-Maher J."/>
            <person name="Tomlinson C."/>
            <person name="Dauphin-Kohlberg S."/>
            <person name="Kozlowicz-Reilly A."/>
            <person name="Shah N."/>
            <person name="Swearengen-Shahid S."/>
            <person name="Snider J."/>
            <person name="Strong J.T."/>
            <person name="Thompson J."/>
            <person name="Yoakum M."/>
            <person name="Leonard S."/>
            <person name="Pearman C."/>
            <person name="Trani L."/>
            <person name="Radionenko M."/>
            <person name="Waligorski J.E."/>
            <person name="Wang C."/>
            <person name="Rock S.M."/>
            <person name="Tin-Wollam A.-M."/>
            <person name="Maupin R."/>
            <person name="Latreille P."/>
            <person name="Wendl M.C."/>
            <person name="Yang S.-P."/>
            <person name="Pohl C."/>
            <person name="Wallis J.W."/>
            <person name="Spieth J."/>
            <person name="Bieri T.A."/>
            <person name="Berkowicz N."/>
            <person name="Nelson J.O."/>
            <person name="Osborne J."/>
            <person name="Ding L."/>
            <person name="Meyer R."/>
            <person name="Sabo A."/>
            <person name="Shotland Y."/>
            <person name="Sinha P."/>
            <person name="Wohldmann P.E."/>
            <person name="Cook L.L."/>
            <person name="Hickenbotham M.T."/>
            <person name="Eldred J."/>
            <person name="Williams D."/>
            <person name="Jones T.A."/>
            <person name="She X."/>
            <person name="Ciccarelli F.D."/>
            <person name="Izaurralde E."/>
            <person name="Taylor J."/>
            <person name="Schmutz J."/>
            <person name="Myers R.M."/>
            <person name="Cox D.R."/>
            <person name="Huang X."/>
            <person name="McPherson J.D."/>
            <person name="Mardis E.R."/>
            <person name="Clifton S.W."/>
            <person name="Warren W.C."/>
            <person name="Chinwalla A.T."/>
            <person name="Eddy S.R."/>
            <person name="Marra M.A."/>
            <person name="Ovcharenko I."/>
            <person name="Furey T.S."/>
            <person name="Miller W."/>
            <person name="Eichler E.E."/>
            <person name="Bork P."/>
            <person name="Suyama M."/>
            <person name="Torrents D."/>
            <person name="Waterston R.H."/>
            <person name="Wilson R.K."/>
        </authorList>
    </citation>
    <scope>NUCLEOTIDE SEQUENCE [LARGE SCALE GENOMIC DNA]</scope>
</reference>
<reference key="2">
    <citation type="submission" date="2002-12" db="EMBL/GenBank/DDBJ databases">
        <authorList>
            <person name="Ebert L."/>
            <person name="Heil O."/>
            <person name="Hennig S."/>
            <person name="Neubert P."/>
            <person name="Partsch E."/>
            <person name="Peters M."/>
            <person name="Radelof U."/>
            <person name="Schneider D."/>
            <person name="Korn B."/>
        </authorList>
    </citation>
    <scope>NUCLEOTIDE SEQUENCE [LARGE SCALE MRNA] OF 1-121</scope>
</reference>
<reference key="3">
    <citation type="journal article" date="2004" name="Nat. Genet.">
        <title>Complete sequencing and characterization of 21,243 full-length human cDNAs.</title>
        <authorList>
            <person name="Ota T."/>
            <person name="Suzuki Y."/>
            <person name="Nishikawa T."/>
            <person name="Otsuki T."/>
            <person name="Sugiyama T."/>
            <person name="Irie R."/>
            <person name="Wakamatsu A."/>
            <person name="Hayashi K."/>
            <person name="Sato H."/>
            <person name="Nagai K."/>
            <person name="Kimura K."/>
            <person name="Makita H."/>
            <person name="Sekine M."/>
            <person name="Obayashi M."/>
            <person name="Nishi T."/>
            <person name="Shibahara T."/>
            <person name="Tanaka T."/>
            <person name="Ishii S."/>
            <person name="Yamamoto J."/>
            <person name="Saito K."/>
            <person name="Kawai Y."/>
            <person name="Isono Y."/>
            <person name="Nakamura Y."/>
            <person name="Nagahari K."/>
            <person name="Murakami K."/>
            <person name="Yasuda T."/>
            <person name="Iwayanagi T."/>
            <person name="Wagatsuma M."/>
            <person name="Shiratori A."/>
            <person name="Sudo H."/>
            <person name="Hosoiri T."/>
            <person name="Kaku Y."/>
            <person name="Kodaira H."/>
            <person name="Kondo H."/>
            <person name="Sugawara M."/>
            <person name="Takahashi M."/>
            <person name="Kanda K."/>
            <person name="Yokoi T."/>
            <person name="Furuya T."/>
            <person name="Kikkawa E."/>
            <person name="Omura Y."/>
            <person name="Abe K."/>
            <person name="Kamihara K."/>
            <person name="Katsuta N."/>
            <person name="Sato K."/>
            <person name="Tanikawa M."/>
            <person name="Yamazaki M."/>
            <person name="Ninomiya K."/>
            <person name="Ishibashi T."/>
            <person name="Yamashita H."/>
            <person name="Murakawa K."/>
            <person name="Fujimori K."/>
            <person name="Tanai H."/>
            <person name="Kimata M."/>
            <person name="Watanabe M."/>
            <person name="Hiraoka S."/>
            <person name="Chiba Y."/>
            <person name="Ishida S."/>
            <person name="Ono Y."/>
            <person name="Takiguchi S."/>
            <person name="Watanabe S."/>
            <person name="Yosida M."/>
            <person name="Hotuta T."/>
            <person name="Kusano J."/>
            <person name="Kanehori K."/>
            <person name="Takahashi-Fujii A."/>
            <person name="Hara H."/>
            <person name="Tanase T.-O."/>
            <person name="Nomura Y."/>
            <person name="Togiya S."/>
            <person name="Komai F."/>
            <person name="Hara R."/>
            <person name="Takeuchi K."/>
            <person name="Arita M."/>
            <person name="Imose N."/>
            <person name="Musashino K."/>
            <person name="Yuuki H."/>
            <person name="Oshima A."/>
            <person name="Sasaki N."/>
            <person name="Aotsuka S."/>
            <person name="Yoshikawa Y."/>
            <person name="Matsunawa H."/>
            <person name="Ichihara T."/>
            <person name="Shiohata N."/>
            <person name="Sano S."/>
            <person name="Moriya S."/>
            <person name="Momiyama H."/>
            <person name="Satoh N."/>
            <person name="Takami S."/>
            <person name="Terashima Y."/>
            <person name="Suzuki O."/>
            <person name="Nakagawa S."/>
            <person name="Senoh A."/>
            <person name="Mizoguchi H."/>
            <person name="Goto Y."/>
            <person name="Shimizu F."/>
            <person name="Wakebe H."/>
            <person name="Hishigaki H."/>
            <person name="Watanabe T."/>
            <person name="Sugiyama A."/>
            <person name="Takemoto M."/>
            <person name="Kawakami B."/>
            <person name="Yamazaki M."/>
            <person name="Watanabe K."/>
            <person name="Kumagai A."/>
            <person name="Itakura S."/>
            <person name="Fukuzumi Y."/>
            <person name="Fujimori Y."/>
            <person name="Komiyama M."/>
            <person name="Tashiro H."/>
            <person name="Tanigami A."/>
            <person name="Fujiwara T."/>
            <person name="Ono T."/>
            <person name="Yamada K."/>
            <person name="Fujii Y."/>
            <person name="Ozaki K."/>
            <person name="Hirao M."/>
            <person name="Ohmori Y."/>
            <person name="Kawabata A."/>
            <person name="Hikiji T."/>
            <person name="Kobatake N."/>
            <person name="Inagaki H."/>
            <person name="Ikema Y."/>
            <person name="Okamoto S."/>
            <person name="Okitani R."/>
            <person name="Kawakami T."/>
            <person name="Noguchi S."/>
            <person name="Itoh T."/>
            <person name="Shigeta K."/>
            <person name="Senba T."/>
            <person name="Matsumura K."/>
            <person name="Nakajima Y."/>
            <person name="Mizuno T."/>
            <person name="Morinaga M."/>
            <person name="Sasaki M."/>
            <person name="Togashi T."/>
            <person name="Oyama M."/>
            <person name="Hata H."/>
            <person name="Watanabe M."/>
            <person name="Komatsu T."/>
            <person name="Mizushima-Sugano J."/>
            <person name="Satoh T."/>
            <person name="Shirai Y."/>
            <person name="Takahashi Y."/>
            <person name="Nakagawa K."/>
            <person name="Okumura K."/>
            <person name="Nagase T."/>
            <person name="Nomura N."/>
            <person name="Kikuchi H."/>
            <person name="Masuho Y."/>
            <person name="Yamashita R."/>
            <person name="Nakai K."/>
            <person name="Yada T."/>
            <person name="Nakamura Y."/>
            <person name="Ohara O."/>
            <person name="Isogai T."/>
            <person name="Sugano S."/>
        </authorList>
    </citation>
    <scope>NUCLEOTIDE SEQUENCE [LARGE SCALE MRNA] OF 8-578</scope>
    <source>
        <tissue>Tongue</tissue>
    </source>
</reference>
<reference key="4">
    <citation type="journal article" date="2004" name="Genome Res.">
        <title>The status, quality, and expansion of the NIH full-length cDNA project: the Mammalian Gene Collection (MGC).</title>
        <authorList>
            <consortium name="The MGC Project Team"/>
        </authorList>
    </citation>
    <scope>NUCLEOTIDE SEQUENCE [LARGE SCALE MRNA] OF 9-394</scope>
</reference>
<gene>
    <name type="primary">KLHL30</name>
</gene>
<feature type="chain" id="PRO_0000274594" description="Kelch-like protein 30">
    <location>
        <begin position="1"/>
        <end position="578"/>
    </location>
</feature>
<feature type="domain" description="BTB" evidence="1">
    <location>
        <begin position="33"/>
        <end position="100"/>
    </location>
</feature>
<feature type="domain" description="BACK">
    <location>
        <begin position="153"/>
        <end position="255"/>
    </location>
</feature>
<feature type="repeat" description="Kelch 1">
    <location>
        <begin position="270"/>
        <end position="326"/>
    </location>
</feature>
<feature type="repeat" description="Kelch 2">
    <location>
        <begin position="327"/>
        <end position="377"/>
    </location>
</feature>
<feature type="repeat" description="Kelch 3">
    <location>
        <begin position="378"/>
        <end position="422"/>
    </location>
</feature>
<feature type="repeat" description="Kelch 4">
    <location>
        <begin position="424"/>
        <end position="471"/>
    </location>
</feature>
<feature type="repeat" description="Kelch 5">
    <location>
        <begin position="473"/>
        <end position="513"/>
    </location>
</feature>
<feature type="repeat" description="Kelch 6">
    <location>
        <begin position="514"/>
        <end position="563"/>
    </location>
</feature>
<feature type="sequence conflict" description="In Ref. 4; AAI05697." evidence="2" ref="4">
    <original>G</original>
    <variation>S</variation>
    <location>
        <position position="49"/>
    </location>
</feature>
<feature type="sequence conflict" description="In Ref. 4; AAI05697." evidence="2" ref="4">
    <original>R</original>
    <variation>Q</variation>
    <location>
        <position position="178"/>
    </location>
</feature>
<feature type="sequence conflict" description="In Ref. 3; BAC86148." evidence="2" ref="3">
    <original>S</original>
    <variation>G</variation>
    <location>
        <position position="195"/>
    </location>
</feature>
<feature type="sequence conflict" description="In Ref. 3; BAC86148 and 4; AAI05697." evidence="2" ref="3 4">
    <original>A</original>
    <variation>V</variation>
    <location>
        <position position="213"/>
    </location>
</feature>
<organism>
    <name type="scientific">Homo sapiens</name>
    <name type="common">Human</name>
    <dbReference type="NCBI Taxonomy" id="9606"/>
    <lineage>
        <taxon>Eukaryota</taxon>
        <taxon>Metazoa</taxon>
        <taxon>Chordata</taxon>
        <taxon>Craniata</taxon>
        <taxon>Vertebrata</taxon>
        <taxon>Euteleostomi</taxon>
        <taxon>Mammalia</taxon>
        <taxon>Eutheria</taxon>
        <taxon>Euarchontoglires</taxon>
        <taxon>Primates</taxon>
        <taxon>Haplorrhini</taxon>
        <taxon>Catarrhini</taxon>
        <taxon>Hominidae</taxon>
        <taxon>Homo</taxon>
    </lineage>
</organism>
<sequence>MVRNVDDLDFHLPSHAQDMLDGLQRLRSQPKLADVTLLVGGRELPCHRGLLALSSPYFHAMFAGDFAESFSARVELRDVEPAVVGQLVDFVYTGRLTITQGNVEALTRTAARLHFPSVQKVCGRYLQQQLDAANCLGICEFGEQQGLLGVAAKAWAFLRENFEAVAREDEFLQLPRERLVTCLAGDLLQVQPEQSRLEALMRWVRHDPQARAAHLPELLSLVHLDAVPRPCVQQLLASEPLIQESEACRAALSQGHDGAPLALQQKLEEVLVVVGGQALEEEEAGEEPTPGLGNFAFYNSKAKRWMALPDFPDYHKWGFSLAALNNNIYVTGGSRGTKTDTWSTTQAWCFPLKEASWKPVAPMLKPRTNHASAALNGEIYVIGGTTLDVVEVESYDPYTDSWTPVSPALKYVSNFSAAGCRGRLYLVGSSACKYNALALQCYNPVTDAWSVIASPFLPKYLSSPRCAALHGELYLIGDNTKKVYVYDPGANLWQKVQSQHSLHENGALVPLGDALYVTGGRWQGMEGDYHVEMEAYDTVRDTWTRHGALPRLWLYHGASTVFLDVSKWTQPSGPTQEH</sequence>
<protein>
    <recommendedName>
        <fullName>Kelch-like protein 30</fullName>
    </recommendedName>
</protein>
<keyword id="KW-0880">Kelch repeat</keyword>
<keyword id="KW-1267">Proteomics identification</keyword>
<keyword id="KW-1185">Reference proteome</keyword>
<keyword id="KW-0677">Repeat</keyword>
<evidence type="ECO:0000255" key="1">
    <source>
        <dbReference type="PROSITE-ProRule" id="PRU00037"/>
    </source>
</evidence>
<evidence type="ECO:0000305" key="2"/>
<comment type="sequence caution" evidence="2">
    <conflict type="erroneous termination">
        <sequence resource="EMBL-CDS" id="BAC86148"/>
    </conflict>
    <text>Truncated C-terminus.</text>
</comment>
<name>KLH30_HUMAN</name>
<proteinExistence type="evidence at protein level"/>
<accession>Q0D2K2</accession>
<accession>Q6ZUS1</accession>